<sequence length="264" mass="29747">MNVSVNIKNVTKEYRIYRTNKERMKDALIPKHKNKTFFALDDISLKAYEGDVIGLVGINGSGKSTLSNIIGGSLSPTVGKVDRNGEVSVIAISAGLSGQLTGIENIEFKMLCMGFKRKEIKAMTPKIIEFSELGEFIYQPVKKYSSGMRAKLGFSINITVNPDILVIDEALSVGDQTFAQKCLDKIYEFKEQNKTIFFVSHNLGQVRQFCTKIAWIEGGKLKDYGELDDVLPKYEAFLNDFKKKSKAEQKEFRNKLDEARFVIK</sequence>
<evidence type="ECO:0000255" key="1">
    <source>
        <dbReference type="HAMAP-Rule" id="MF_01715"/>
    </source>
</evidence>
<reference key="1">
    <citation type="journal article" date="2001" name="Lancet">
        <title>Whole genome sequencing of meticillin-resistant Staphylococcus aureus.</title>
        <authorList>
            <person name="Kuroda M."/>
            <person name="Ohta T."/>
            <person name="Uchiyama I."/>
            <person name="Baba T."/>
            <person name="Yuzawa H."/>
            <person name="Kobayashi I."/>
            <person name="Cui L."/>
            <person name="Oguchi A."/>
            <person name="Aoki K."/>
            <person name="Nagai Y."/>
            <person name="Lian J.-Q."/>
            <person name="Ito T."/>
            <person name="Kanamori M."/>
            <person name="Matsumaru H."/>
            <person name="Maruyama A."/>
            <person name="Murakami H."/>
            <person name="Hosoyama A."/>
            <person name="Mizutani-Ui Y."/>
            <person name="Takahashi N.K."/>
            <person name="Sawano T."/>
            <person name="Inoue R."/>
            <person name="Kaito C."/>
            <person name="Sekimizu K."/>
            <person name="Hirakawa H."/>
            <person name="Kuhara S."/>
            <person name="Goto S."/>
            <person name="Yabuzaki J."/>
            <person name="Kanehisa M."/>
            <person name="Yamashita A."/>
            <person name="Oshima K."/>
            <person name="Furuya K."/>
            <person name="Yoshino C."/>
            <person name="Shiba T."/>
            <person name="Hattori M."/>
            <person name="Ogasawara N."/>
            <person name="Hayashi H."/>
            <person name="Hiramatsu K."/>
        </authorList>
    </citation>
    <scope>NUCLEOTIDE SEQUENCE [LARGE SCALE GENOMIC DNA]</scope>
    <source>
        <strain>Mu50 / ATCC 700699</strain>
    </source>
</reference>
<protein>
    <recommendedName>
        <fullName evidence="1">Teichoic acids export ATP-binding protein TagH</fullName>
        <ecNumber evidence="1">7.5.2.4</ecNumber>
    </recommendedName>
</protein>
<accession>Q7A2W2</accession>
<dbReference type="EC" id="7.5.2.4" evidence="1"/>
<dbReference type="EMBL" id="BA000017">
    <property type="protein sequence ID" value="BAB56799.1"/>
    <property type="molecule type" value="Genomic_DNA"/>
</dbReference>
<dbReference type="RefSeq" id="WP_001103231.1">
    <property type="nucleotide sequence ID" value="NC_002758.2"/>
</dbReference>
<dbReference type="SMR" id="Q7A2W2"/>
<dbReference type="KEGG" id="sav:SAV0637"/>
<dbReference type="HOGENOM" id="CLU_000604_1_2_9"/>
<dbReference type="PhylomeDB" id="Q7A2W2"/>
<dbReference type="Proteomes" id="UP000002481">
    <property type="component" value="Chromosome"/>
</dbReference>
<dbReference type="GO" id="GO:0005886">
    <property type="term" value="C:plasma membrane"/>
    <property type="evidence" value="ECO:0007669"/>
    <property type="project" value="UniProtKB-SubCell"/>
</dbReference>
<dbReference type="GO" id="GO:0015438">
    <property type="term" value="F:ABC-type teichoic acid transporter activity"/>
    <property type="evidence" value="ECO:0007669"/>
    <property type="project" value="UniProtKB-EC"/>
</dbReference>
<dbReference type="GO" id="GO:0005524">
    <property type="term" value="F:ATP binding"/>
    <property type="evidence" value="ECO:0007669"/>
    <property type="project" value="UniProtKB-KW"/>
</dbReference>
<dbReference type="GO" id="GO:0016887">
    <property type="term" value="F:ATP hydrolysis activity"/>
    <property type="evidence" value="ECO:0007669"/>
    <property type="project" value="InterPro"/>
</dbReference>
<dbReference type="CDD" id="cd03220">
    <property type="entry name" value="ABC_KpsT_Wzt"/>
    <property type="match status" value="1"/>
</dbReference>
<dbReference type="FunFam" id="3.40.50.300:FF:003010">
    <property type="entry name" value="Teichoic acids export ATP-binding protein TagH"/>
    <property type="match status" value="1"/>
</dbReference>
<dbReference type="Gene3D" id="3.40.50.300">
    <property type="entry name" value="P-loop containing nucleotide triphosphate hydrolases"/>
    <property type="match status" value="1"/>
</dbReference>
<dbReference type="InterPro" id="IPR003593">
    <property type="entry name" value="AAA+_ATPase"/>
</dbReference>
<dbReference type="InterPro" id="IPR003439">
    <property type="entry name" value="ABC_transporter-like_ATP-bd"/>
</dbReference>
<dbReference type="InterPro" id="IPR017871">
    <property type="entry name" value="ABC_transporter-like_CS"/>
</dbReference>
<dbReference type="InterPro" id="IPR015860">
    <property type="entry name" value="ABC_transpr_TagH-like"/>
</dbReference>
<dbReference type="InterPro" id="IPR050683">
    <property type="entry name" value="Bact_Polysacc_Export_ATP-bd"/>
</dbReference>
<dbReference type="InterPro" id="IPR027417">
    <property type="entry name" value="P-loop_NTPase"/>
</dbReference>
<dbReference type="NCBIfam" id="NF010066">
    <property type="entry name" value="PRK13546.1"/>
    <property type="match status" value="1"/>
</dbReference>
<dbReference type="PANTHER" id="PTHR46743">
    <property type="entry name" value="TEICHOIC ACIDS EXPORT ATP-BINDING PROTEIN TAGH"/>
    <property type="match status" value="1"/>
</dbReference>
<dbReference type="PANTHER" id="PTHR46743:SF2">
    <property type="entry name" value="TEICHOIC ACIDS EXPORT ATP-BINDING PROTEIN TAGH"/>
    <property type="match status" value="1"/>
</dbReference>
<dbReference type="Pfam" id="PF00005">
    <property type="entry name" value="ABC_tran"/>
    <property type="match status" value="1"/>
</dbReference>
<dbReference type="SMART" id="SM00382">
    <property type="entry name" value="AAA"/>
    <property type="match status" value="1"/>
</dbReference>
<dbReference type="SUPFAM" id="SSF52540">
    <property type="entry name" value="P-loop containing nucleoside triphosphate hydrolases"/>
    <property type="match status" value="1"/>
</dbReference>
<dbReference type="PROSITE" id="PS00211">
    <property type="entry name" value="ABC_TRANSPORTER_1"/>
    <property type="match status" value="1"/>
</dbReference>
<dbReference type="PROSITE" id="PS50893">
    <property type="entry name" value="ABC_TRANSPORTER_2"/>
    <property type="match status" value="1"/>
</dbReference>
<dbReference type="PROSITE" id="PS51251">
    <property type="entry name" value="TAGH"/>
    <property type="match status" value="1"/>
</dbReference>
<gene>
    <name evidence="1" type="primary">tagH</name>
    <name type="ordered locus">SAV0637</name>
</gene>
<proteinExistence type="inferred from homology"/>
<comment type="function">
    <text evidence="1">Part of the ABC transporter complex TagGH involved in teichoic acids export. Responsible for energy coupling to the transport system.</text>
</comment>
<comment type="catalytic activity">
    <reaction evidence="1">
        <text>ATP + H2O + teichoic acidSide 1 = ADP + phosphate + teichoic acidSide 2.</text>
        <dbReference type="EC" id="7.5.2.4"/>
    </reaction>
</comment>
<comment type="subunit">
    <text evidence="1">The complex is composed of two ATP-binding proteins (TagH) and two transmembrane proteins (TagG).</text>
</comment>
<comment type="subcellular location">
    <subcellularLocation>
        <location evidence="1">Cell membrane</location>
        <topology evidence="1">Peripheral membrane protein</topology>
    </subcellularLocation>
</comment>
<comment type="similarity">
    <text evidence="1">Belongs to the ABC transporter superfamily. Teichoic acids exporter (TC 3.A.1.104.1) family.</text>
</comment>
<keyword id="KW-0067">ATP-binding</keyword>
<keyword id="KW-1003">Cell membrane</keyword>
<keyword id="KW-0472">Membrane</keyword>
<keyword id="KW-0547">Nucleotide-binding</keyword>
<keyword id="KW-1278">Translocase</keyword>
<keyword id="KW-0813">Transport</keyword>
<feature type="chain" id="PRO_0000092996" description="Teichoic acids export ATP-binding protein TagH">
    <location>
        <begin position="1"/>
        <end position="264"/>
    </location>
</feature>
<feature type="domain" description="ABC transporter" evidence="1">
    <location>
        <begin position="5"/>
        <end position="243"/>
    </location>
</feature>
<feature type="binding site" evidence="1">
    <location>
        <begin position="57"/>
        <end position="64"/>
    </location>
    <ligand>
        <name>ATP</name>
        <dbReference type="ChEBI" id="CHEBI:30616"/>
    </ligand>
</feature>
<name>TAGH_STAAM</name>
<organism>
    <name type="scientific">Staphylococcus aureus (strain Mu50 / ATCC 700699)</name>
    <dbReference type="NCBI Taxonomy" id="158878"/>
    <lineage>
        <taxon>Bacteria</taxon>
        <taxon>Bacillati</taxon>
        <taxon>Bacillota</taxon>
        <taxon>Bacilli</taxon>
        <taxon>Bacillales</taxon>
        <taxon>Staphylococcaceae</taxon>
        <taxon>Staphylococcus</taxon>
    </lineage>
</organism>